<protein>
    <recommendedName>
        <fullName evidence="1">Na(+)/H(+) antiporter NhaA</fullName>
    </recommendedName>
    <alternativeName>
        <fullName evidence="1">Sodium/proton antiporter NhaA</fullName>
    </alternativeName>
</protein>
<name>NHAA_YERPE</name>
<organism>
    <name type="scientific">Yersinia pestis</name>
    <dbReference type="NCBI Taxonomy" id="632"/>
    <lineage>
        <taxon>Bacteria</taxon>
        <taxon>Pseudomonadati</taxon>
        <taxon>Pseudomonadota</taxon>
        <taxon>Gammaproteobacteria</taxon>
        <taxon>Enterobacterales</taxon>
        <taxon>Yersiniaceae</taxon>
        <taxon>Yersinia</taxon>
    </lineage>
</organism>
<proteinExistence type="inferred from homology"/>
<keyword id="KW-0050">Antiport</keyword>
<keyword id="KW-0997">Cell inner membrane</keyword>
<keyword id="KW-1003">Cell membrane</keyword>
<keyword id="KW-0406">Ion transport</keyword>
<keyword id="KW-0472">Membrane</keyword>
<keyword id="KW-1185">Reference proteome</keyword>
<keyword id="KW-0915">Sodium</keyword>
<keyword id="KW-0739">Sodium transport</keyword>
<keyword id="KW-0812">Transmembrane</keyword>
<keyword id="KW-1133">Transmembrane helix</keyword>
<keyword id="KW-0813">Transport</keyword>
<evidence type="ECO:0000255" key="1">
    <source>
        <dbReference type="HAMAP-Rule" id="MF_01844"/>
    </source>
</evidence>
<comment type="function">
    <text evidence="1">Na(+)/H(+) antiporter that extrudes sodium in exchange for external protons.</text>
</comment>
<comment type="catalytic activity">
    <reaction evidence="1">
        <text>Na(+)(in) + 2 H(+)(out) = Na(+)(out) + 2 H(+)(in)</text>
        <dbReference type="Rhea" id="RHEA:29251"/>
        <dbReference type="ChEBI" id="CHEBI:15378"/>
        <dbReference type="ChEBI" id="CHEBI:29101"/>
    </reaction>
    <physiologicalReaction direction="left-to-right" evidence="1">
        <dbReference type="Rhea" id="RHEA:29252"/>
    </physiologicalReaction>
</comment>
<comment type="subcellular location">
    <subcellularLocation>
        <location evidence="1">Cell inner membrane</location>
        <topology evidence="1">Multi-pass membrane protein</topology>
    </subcellularLocation>
</comment>
<comment type="similarity">
    <text evidence="1">Belongs to the NhaA Na(+)/H(+) (TC 2.A.33) antiporter family.</text>
</comment>
<gene>
    <name evidence="1" type="primary">nhaA</name>
    <name type="ordered locus">YPO0470</name>
    <name type="ordered locus">y3704</name>
    <name type="ordered locus">YP_3710</name>
</gene>
<reference key="1">
    <citation type="journal article" date="2001" name="Nature">
        <title>Genome sequence of Yersinia pestis, the causative agent of plague.</title>
        <authorList>
            <person name="Parkhill J."/>
            <person name="Wren B.W."/>
            <person name="Thomson N.R."/>
            <person name="Titball R.W."/>
            <person name="Holden M.T.G."/>
            <person name="Prentice M.B."/>
            <person name="Sebaihia M."/>
            <person name="James K.D."/>
            <person name="Churcher C.M."/>
            <person name="Mungall K.L."/>
            <person name="Baker S."/>
            <person name="Basham D."/>
            <person name="Bentley S.D."/>
            <person name="Brooks K."/>
            <person name="Cerdeno-Tarraga A.-M."/>
            <person name="Chillingworth T."/>
            <person name="Cronin A."/>
            <person name="Davies R.M."/>
            <person name="Davis P."/>
            <person name="Dougan G."/>
            <person name="Feltwell T."/>
            <person name="Hamlin N."/>
            <person name="Holroyd S."/>
            <person name="Jagels K."/>
            <person name="Karlyshev A.V."/>
            <person name="Leather S."/>
            <person name="Moule S."/>
            <person name="Oyston P.C.F."/>
            <person name="Quail M.A."/>
            <person name="Rutherford K.M."/>
            <person name="Simmonds M."/>
            <person name="Skelton J."/>
            <person name="Stevens K."/>
            <person name="Whitehead S."/>
            <person name="Barrell B.G."/>
        </authorList>
    </citation>
    <scope>NUCLEOTIDE SEQUENCE [LARGE SCALE GENOMIC DNA]</scope>
    <source>
        <strain>CO-92 / Biovar Orientalis</strain>
    </source>
</reference>
<reference key="2">
    <citation type="journal article" date="2002" name="J. Bacteriol.">
        <title>Genome sequence of Yersinia pestis KIM.</title>
        <authorList>
            <person name="Deng W."/>
            <person name="Burland V."/>
            <person name="Plunkett G. III"/>
            <person name="Boutin A."/>
            <person name="Mayhew G.F."/>
            <person name="Liss P."/>
            <person name="Perna N.T."/>
            <person name="Rose D.J."/>
            <person name="Mau B."/>
            <person name="Zhou S."/>
            <person name="Schwartz D.C."/>
            <person name="Fetherston J.D."/>
            <person name="Lindler L.E."/>
            <person name="Brubaker R.R."/>
            <person name="Plano G.V."/>
            <person name="Straley S.C."/>
            <person name="McDonough K.A."/>
            <person name="Nilles M.L."/>
            <person name="Matson J.S."/>
            <person name="Blattner F.R."/>
            <person name="Perry R.D."/>
        </authorList>
    </citation>
    <scope>NUCLEOTIDE SEQUENCE [LARGE SCALE GENOMIC DNA]</scope>
    <source>
        <strain>KIM10+ / Biovar Mediaevalis</strain>
    </source>
</reference>
<reference key="3">
    <citation type="journal article" date="2004" name="DNA Res.">
        <title>Complete genome sequence of Yersinia pestis strain 91001, an isolate avirulent to humans.</title>
        <authorList>
            <person name="Song Y."/>
            <person name="Tong Z."/>
            <person name="Wang J."/>
            <person name="Wang L."/>
            <person name="Guo Z."/>
            <person name="Han Y."/>
            <person name="Zhang J."/>
            <person name="Pei D."/>
            <person name="Zhou D."/>
            <person name="Qin H."/>
            <person name="Pang X."/>
            <person name="Han Y."/>
            <person name="Zhai J."/>
            <person name="Li M."/>
            <person name="Cui B."/>
            <person name="Qi Z."/>
            <person name="Jin L."/>
            <person name="Dai R."/>
            <person name="Chen F."/>
            <person name="Li S."/>
            <person name="Ye C."/>
            <person name="Du Z."/>
            <person name="Lin W."/>
            <person name="Wang J."/>
            <person name="Yu J."/>
            <person name="Yang H."/>
            <person name="Wang J."/>
            <person name="Huang P."/>
            <person name="Yang R."/>
        </authorList>
    </citation>
    <scope>NUCLEOTIDE SEQUENCE [LARGE SCALE GENOMIC DNA]</scope>
    <source>
        <strain>91001 / Biovar Mediaevalis</strain>
    </source>
</reference>
<sequence length="394" mass="41718">MTNIIRQFLRQEAAGGLILIIAAAIALLMANSALQGVYQSFLDIPVSIKIASLDISKPLLLWINDGLMAVFFLMIGLEVKRELMEGSLAGRDKAVFPAIAALGGMLAPALIYLLFNGADEVTRQGWAIPAATDIAFALGVMALLGNRVPTGLKVFLLALAIIDDLGVIIIIALFYTQQVSLQSLGIAAAAIALLAYMNWRGVGKTSAYLLVGLVLWVCILKSGVHATLAGVIVGFMIPLHTQDQRSPSESLEHGLHPWVAYLILPLFAFANAGVSLQGVSLSGLTSLLPMGIATGLFIGKPLGIFTFSWLAVKLGIAKLPDAINFKQIFAVSVLCGIGFTMSIFIASLAFEGTDIALTTYSKLGILLGSTTAAVVGYSLLRLVLPARRKAVNVR</sequence>
<feature type="chain" id="PRO_0000334467" description="Na(+)/H(+) antiporter NhaA">
    <location>
        <begin position="1"/>
        <end position="394"/>
    </location>
</feature>
<feature type="transmembrane region" description="Helical" evidence="1">
    <location>
        <begin position="14"/>
        <end position="34"/>
    </location>
</feature>
<feature type="transmembrane region" description="Helical" evidence="1">
    <location>
        <begin position="59"/>
        <end position="79"/>
    </location>
</feature>
<feature type="transmembrane region" description="Helical" evidence="1">
    <location>
        <begin position="95"/>
        <end position="115"/>
    </location>
</feature>
<feature type="transmembrane region" description="Helical" evidence="1">
    <location>
        <begin position="125"/>
        <end position="145"/>
    </location>
</feature>
<feature type="transmembrane region" description="Helical" evidence="1">
    <location>
        <begin position="154"/>
        <end position="174"/>
    </location>
</feature>
<feature type="transmembrane region" description="Helical" evidence="1">
    <location>
        <begin position="179"/>
        <end position="199"/>
    </location>
</feature>
<feature type="transmembrane region" description="Helical" evidence="1">
    <location>
        <begin position="213"/>
        <end position="233"/>
    </location>
</feature>
<feature type="transmembrane region" description="Helical" evidence="1">
    <location>
        <begin position="254"/>
        <end position="274"/>
    </location>
</feature>
<feature type="transmembrane region" description="Helical" evidence="1">
    <location>
        <begin position="292"/>
        <end position="312"/>
    </location>
</feature>
<feature type="transmembrane region" description="Helical" evidence="1">
    <location>
        <begin position="328"/>
        <end position="348"/>
    </location>
</feature>
<feature type="transmembrane region" description="Helical" evidence="1">
    <location>
        <begin position="363"/>
        <end position="383"/>
    </location>
</feature>
<accession>Q7CG77</accession>
<accession>Q74Q13</accession>
<dbReference type="EMBL" id="AL590842">
    <property type="protein sequence ID" value="CAL19149.1"/>
    <property type="molecule type" value="Genomic_DNA"/>
</dbReference>
<dbReference type="EMBL" id="AE009952">
    <property type="protein sequence ID" value="AAM87252.1"/>
    <property type="molecule type" value="Genomic_DNA"/>
</dbReference>
<dbReference type="EMBL" id="AE017042">
    <property type="protein sequence ID" value="AAS63858.1"/>
    <property type="molecule type" value="Genomic_DNA"/>
</dbReference>
<dbReference type="PIR" id="AC0058">
    <property type="entry name" value="AC0058"/>
</dbReference>
<dbReference type="RefSeq" id="WP_002220711.1">
    <property type="nucleotide sequence ID" value="NZ_WUCM01000002.1"/>
</dbReference>
<dbReference type="RefSeq" id="YP_002345542.1">
    <property type="nucleotide sequence ID" value="NC_003143.1"/>
</dbReference>
<dbReference type="SMR" id="Q7CG77"/>
<dbReference type="IntAct" id="Q7CG77">
    <property type="interactions" value="5"/>
</dbReference>
<dbReference type="STRING" id="214092.YPO0470"/>
<dbReference type="PaxDb" id="214092-YPO0470"/>
<dbReference type="DNASU" id="1148651"/>
<dbReference type="EnsemblBacteria" id="AAS63858">
    <property type="protein sequence ID" value="AAS63858"/>
    <property type="gene ID" value="YP_3710"/>
</dbReference>
<dbReference type="GeneID" id="57974139"/>
<dbReference type="KEGG" id="ype:YPO0470"/>
<dbReference type="KEGG" id="ypk:y3704"/>
<dbReference type="KEGG" id="ypm:YP_3710"/>
<dbReference type="PATRIC" id="fig|214092.21.peg.718"/>
<dbReference type="eggNOG" id="COG3004">
    <property type="taxonomic scope" value="Bacteria"/>
</dbReference>
<dbReference type="HOGENOM" id="CLU_015803_1_0_6"/>
<dbReference type="OMA" id="HGFGIPM"/>
<dbReference type="OrthoDB" id="9808135at2"/>
<dbReference type="Proteomes" id="UP000000815">
    <property type="component" value="Chromosome"/>
</dbReference>
<dbReference type="Proteomes" id="UP000001019">
    <property type="component" value="Chromosome"/>
</dbReference>
<dbReference type="Proteomes" id="UP000002490">
    <property type="component" value="Chromosome"/>
</dbReference>
<dbReference type="GO" id="GO:0005886">
    <property type="term" value="C:plasma membrane"/>
    <property type="evidence" value="ECO:0000318"/>
    <property type="project" value="GO_Central"/>
</dbReference>
<dbReference type="GO" id="GO:0015385">
    <property type="term" value="F:sodium:proton antiporter activity"/>
    <property type="evidence" value="ECO:0000318"/>
    <property type="project" value="GO_Central"/>
</dbReference>
<dbReference type="GO" id="GO:0006885">
    <property type="term" value="P:regulation of pH"/>
    <property type="evidence" value="ECO:0007669"/>
    <property type="project" value="InterPro"/>
</dbReference>
<dbReference type="Gene3D" id="1.20.1530.10">
    <property type="entry name" value="Na+/H+ antiporter like domain"/>
    <property type="match status" value="1"/>
</dbReference>
<dbReference type="HAMAP" id="MF_01844">
    <property type="entry name" value="NhaA"/>
    <property type="match status" value="1"/>
</dbReference>
<dbReference type="InterPro" id="IPR023171">
    <property type="entry name" value="Na/H_antiporter_dom_sf"/>
</dbReference>
<dbReference type="InterPro" id="IPR004670">
    <property type="entry name" value="NhaA"/>
</dbReference>
<dbReference type="NCBIfam" id="TIGR00773">
    <property type="entry name" value="NhaA"/>
    <property type="match status" value="1"/>
</dbReference>
<dbReference type="NCBIfam" id="NF007111">
    <property type="entry name" value="PRK09560.1"/>
    <property type="match status" value="1"/>
</dbReference>
<dbReference type="NCBIfam" id="NF007112">
    <property type="entry name" value="PRK09561.1"/>
    <property type="match status" value="1"/>
</dbReference>
<dbReference type="PANTHER" id="PTHR30341:SF0">
    <property type="entry name" value="NA(+)_H(+) ANTIPORTER NHAA"/>
    <property type="match status" value="1"/>
</dbReference>
<dbReference type="PANTHER" id="PTHR30341">
    <property type="entry name" value="SODIUM ION/PROTON ANTIPORTER NHAA-RELATED"/>
    <property type="match status" value="1"/>
</dbReference>
<dbReference type="Pfam" id="PF06965">
    <property type="entry name" value="Na_H_antiport_1"/>
    <property type="match status" value="1"/>
</dbReference>